<reference key="1">
    <citation type="journal article" date="2009" name="Nature">
        <title>Evolution of pathogenicity and sexual reproduction in eight Candida genomes.</title>
        <authorList>
            <person name="Butler G."/>
            <person name="Rasmussen M.D."/>
            <person name="Lin M.F."/>
            <person name="Santos M.A.S."/>
            <person name="Sakthikumar S."/>
            <person name="Munro C.A."/>
            <person name="Rheinbay E."/>
            <person name="Grabherr M."/>
            <person name="Forche A."/>
            <person name="Reedy J.L."/>
            <person name="Agrafioti I."/>
            <person name="Arnaud M.B."/>
            <person name="Bates S."/>
            <person name="Brown A.J.P."/>
            <person name="Brunke S."/>
            <person name="Costanzo M.C."/>
            <person name="Fitzpatrick D.A."/>
            <person name="de Groot P.W.J."/>
            <person name="Harris D."/>
            <person name="Hoyer L.L."/>
            <person name="Hube B."/>
            <person name="Klis F.M."/>
            <person name="Kodira C."/>
            <person name="Lennard N."/>
            <person name="Logue M.E."/>
            <person name="Martin R."/>
            <person name="Neiman A.M."/>
            <person name="Nikolaou E."/>
            <person name="Quail M.A."/>
            <person name="Quinn J."/>
            <person name="Santos M.C."/>
            <person name="Schmitzberger F.F."/>
            <person name="Sherlock G."/>
            <person name="Shah P."/>
            <person name="Silverstein K.A.T."/>
            <person name="Skrzypek M.S."/>
            <person name="Soll D."/>
            <person name="Staggs R."/>
            <person name="Stansfield I."/>
            <person name="Stumpf M.P.H."/>
            <person name="Sudbery P.E."/>
            <person name="Srikantha T."/>
            <person name="Zeng Q."/>
            <person name="Berman J."/>
            <person name="Berriman M."/>
            <person name="Heitman J."/>
            <person name="Gow N.A.R."/>
            <person name="Lorenz M.C."/>
            <person name="Birren B.W."/>
            <person name="Kellis M."/>
            <person name="Cuomo C.A."/>
        </authorList>
    </citation>
    <scope>NUCLEOTIDE SEQUENCE [LARGE SCALE GENOMIC DNA]</scope>
    <source>
        <strain>WO-1</strain>
    </source>
</reference>
<accession>C4YHS3</accession>
<evidence type="ECO:0000250" key="1">
    <source>
        <dbReference type="UniProtKB" id="P35732"/>
    </source>
</evidence>
<evidence type="ECO:0000255" key="2">
    <source>
        <dbReference type="PROSITE-ProRule" id="PRU00468"/>
    </source>
</evidence>
<evidence type="ECO:0000256" key="3">
    <source>
        <dbReference type="SAM" id="MobiDB-lite"/>
    </source>
</evidence>
<evidence type="ECO:0000305" key="4"/>
<feature type="chain" id="PRO_0000405662" description="RNA polymerase II degradation factor 1">
    <location>
        <begin position="1"/>
        <end position="492"/>
    </location>
</feature>
<feature type="domain" description="CUE" evidence="2">
    <location>
        <begin position="23"/>
        <end position="66"/>
    </location>
</feature>
<feature type="region of interest" description="Disordered" evidence="3">
    <location>
        <begin position="1"/>
        <end position="25"/>
    </location>
</feature>
<feature type="region of interest" description="Disordered" evidence="3">
    <location>
        <begin position="73"/>
        <end position="309"/>
    </location>
</feature>
<feature type="compositionally biased region" description="Basic residues" evidence="3">
    <location>
        <begin position="1"/>
        <end position="12"/>
    </location>
</feature>
<feature type="compositionally biased region" description="Low complexity" evidence="3">
    <location>
        <begin position="16"/>
        <end position="25"/>
    </location>
</feature>
<feature type="compositionally biased region" description="Low complexity" evidence="3">
    <location>
        <begin position="91"/>
        <end position="109"/>
    </location>
</feature>
<feature type="compositionally biased region" description="Basic residues" evidence="3">
    <location>
        <begin position="126"/>
        <end position="140"/>
    </location>
</feature>
<feature type="compositionally biased region" description="Low complexity" evidence="3">
    <location>
        <begin position="148"/>
        <end position="164"/>
    </location>
</feature>
<feature type="compositionally biased region" description="Basic and acidic residues" evidence="3">
    <location>
        <begin position="180"/>
        <end position="191"/>
    </location>
</feature>
<feature type="compositionally biased region" description="Acidic residues" evidence="3">
    <location>
        <begin position="202"/>
        <end position="216"/>
    </location>
</feature>
<feature type="compositionally biased region" description="Basic and acidic residues" evidence="3">
    <location>
        <begin position="282"/>
        <end position="292"/>
    </location>
</feature>
<proteinExistence type="inferred from homology"/>
<comment type="function">
    <text evidence="1">Recruits the ubiquitination machinery to RNA polymerase II for polyubiquitination, removal and degradation, when the transcription-coupled repair (TCR) factor RAD26 fails to efficiently displace stalled RNA polymerase II. Also involved in telomere length regulation. Binds DNA.</text>
</comment>
<comment type="subunit">
    <text evidence="1">Homodimer; may form higher order oligomers. Interacts with the large RNA polymerase II subunit RPO21; the interaction is direct and serves to bridge RPO21 to the Elongin complex in a manner dependent on transcription stress. Interacts with RAD26.</text>
</comment>
<comment type="subcellular location">
    <subcellularLocation>
        <location evidence="1">Cytoplasm</location>
    </subcellularLocation>
    <subcellularLocation>
        <location evidence="1">Nucleus</location>
    </subcellularLocation>
    <subcellularLocation>
        <location evidence="1">Chromosome</location>
        <location evidence="1">Telomere</location>
    </subcellularLocation>
    <text evidence="1">During transcription stress, localizes to the nucleus following proteolytic cleavage by the proteasome.</text>
</comment>
<comment type="PTM">
    <text evidence="1">Ubiquitinated.</text>
</comment>
<comment type="PTM">
    <text evidence="1">Proteolytically cleaved by the proteasome in response to transcription stress; the resulting N-terminal form constitutes the activated nuclear form and the C-terminal portion is degraded.</text>
</comment>
<comment type="similarity">
    <text evidence="4">Belongs to the DEF1 family.</text>
</comment>
<sequence length="492" mass="54131">MSTYRKTYKNQSKRFNNGNNSNSTSTELTNLVEMFPDWEADELQGLLSENDNSLEIVIDLIVNNKVSKWEPIKKEKHKKKEHKDDTTDSVTGNANGASNSGSSNSTTASGDRRLNNKAKASTSSRPPKRQQHPNAAHKKNEKTERSKASTVSTTTTSATSSVTKESVPPSNSWAAALSNDKPKKQETKSEASESIPSSNDGGDAETVPEVEQAETLEESHQEPENVEEPIESVSEQSQPENTKPVLKSAAIPEPKQGSWASAIAPKTKPKPKTVSKPVPQPEESKPEEHIPVQEEAQPVESVLEDKPAVEAVQPVQPPVEDEPVEAPAASSVAAVADASFSEPTASSIIDQQPQVVLPTTQQQVDSVGISFGSLSVDAGEPKEAAEVIQDETISEQVQPEQQQQSQQQPLQEQQRYGLYNQQPTQQRYQQNNYQQQGQYSKQQQQQLQQQNTSQPTQQQTTIRLLWSISTTTISSTNSSTRCSIWWLSWILL</sequence>
<protein>
    <recommendedName>
        <fullName>RNA polymerase II degradation factor 1</fullName>
    </recommendedName>
</protein>
<keyword id="KW-0158">Chromosome</keyword>
<keyword id="KW-0963">Cytoplasm</keyword>
<keyword id="KW-0227">DNA damage</keyword>
<keyword id="KW-0234">DNA repair</keyword>
<keyword id="KW-0238">DNA-binding</keyword>
<keyword id="KW-0539">Nucleus</keyword>
<keyword id="KW-0779">Telomere</keyword>
<keyword id="KW-0832">Ubl conjugation</keyword>
<keyword id="KW-0833">Ubl conjugation pathway</keyword>
<gene>
    <name type="primary">DEF1</name>
    <name type="ORF">CAWG_03622</name>
</gene>
<dbReference type="EMBL" id="CH672349">
    <property type="protein sequence ID" value="EEQ45305.1"/>
    <property type="molecule type" value="Genomic_DNA"/>
</dbReference>
<dbReference type="SMR" id="C4YHS3"/>
<dbReference type="PaxDb" id="5476-C4YHS3"/>
<dbReference type="VEuPathDB" id="FungiDB:CAWG_03622"/>
<dbReference type="HOGENOM" id="CLU_043289_0_0_1"/>
<dbReference type="OMA" id="AGNQATH"/>
<dbReference type="OrthoDB" id="26927at766764"/>
<dbReference type="Proteomes" id="UP000001429">
    <property type="component" value="Chromosome 4, Supercontig 1.4"/>
</dbReference>
<dbReference type="GO" id="GO:0000781">
    <property type="term" value="C:chromosome, telomeric region"/>
    <property type="evidence" value="ECO:0007669"/>
    <property type="project" value="UniProtKB-SubCell"/>
</dbReference>
<dbReference type="GO" id="GO:0005737">
    <property type="term" value="C:cytoplasm"/>
    <property type="evidence" value="ECO:0007669"/>
    <property type="project" value="UniProtKB-SubCell"/>
</dbReference>
<dbReference type="GO" id="GO:0005634">
    <property type="term" value="C:nucleus"/>
    <property type="evidence" value="ECO:0007669"/>
    <property type="project" value="UniProtKB-SubCell"/>
</dbReference>
<dbReference type="GO" id="GO:0003677">
    <property type="term" value="F:DNA binding"/>
    <property type="evidence" value="ECO:0007669"/>
    <property type="project" value="UniProtKB-KW"/>
</dbReference>
<dbReference type="GO" id="GO:0043130">
    <property type="term" value="F:ubiquitin binding"/>
    <property type="evidence" value="ECO:0007669"/>
    <property type="project" value="InterPro"/>
</dbReference>
<dbReference type="GO" id="GO:0006281">
    <property type="term" value="P:DNA repair"/>
    <property type="evidence" value="ECO:0007669"/>
    <property type="project" value="UniProtKB-KW"/>
</dbReference>
<dbReference type="InterPro" id="IPR003892">
    <property type="entry name" value="CUE"/>
</dbReference>
<dbReference type="Pfam" id="PF02845">
    <property type="entry name" value="CUE"/>
    <property type="match status" value="1"/>
</dbReference>
<dbReference type="PROSITE" id="PS51140">
    <property type="entry name" value="CUE"/>
    <property type="match status" value="1"/>
</dbReference>
<organism>
    <name type="scientific">Candida albicans (strain WO-1)</name>
    <name type="common">Yeast</name>
    <dbReference type="NCBI Taxonomy" id="294748"/>
    <lineage>
        <taxon>Eukaryota</taxon>
        <taxon>Fungi</taxon>
        <taxon>Dikarya</taxon>
        <taxon>Ascomycota</taxon>
        <taxon>Saccharomycotina</taxon>
        <taxon>Pichiomycetes</taxon>
        <taxon>Debaryomycetaceae</taxon>
        <taxon>Candida/Lodderomyces clade</taxon>
        <taxon>Candida</taxon>
    </lineage>
</organism>
<name>DEF1_CANAW</name>